<gene>
    <name type="primary">GATA6</name>
</gene>
<feature type="chain" id="PRO_0000083425" description="Transcription factor GATA-6">
    <location>
        <begin position="1" status="less than"/>
        <end position="451"/>
    </location>
</feature>
<feature type="zinc finger region" description="GATA-type 1" evidence="4">
    <location>
        <begin position="246"/>
        <end position="270"/>
    </location>
</feature>
<feature type="zinc finger region" description="GATA-type 2" evidence="4">
    <location>
        <begin position="300"/>
        <end position="324"/>
    </location>
</feature>
<feature type="region of interest" description="Disordered" evidence="5">
    <location>
        <begin position="69"/>
        <end position="111"/>
    </location>
</feature>
<feature type="region of interest" description="Disordered" evidence="5">
    <location>
        <begin position="338"/>
        <end position="416"/>
    </location>
</feature>
<feature type="compositionally biased region" description="Gly residues" evidence="5">
    <location>
        <begin position="94"/>
        <end position="109"/>
    </location>
</feature>
<feature type="compositionally biased region" description="Basic residues" evidence="5">
    <location>
        <begin position="346"/>
        <end position="355"/>
    </location>
</feature>
<feature type="compositionally biased region" description="Polar residues" evidence="5">
    <location>
        <begin position="356"/>
        <end position="394"/>
    </location>
</feature>
<feature type="compositionally biased region" description="Polar residues" evidence="5">
    <location>
        <begin position="402"/>
        <end position="413"/>
    </location>
</feature>
<feature type="modified residue" description="Phosphoserine" evidence="3">
    <location>
        <position position="126"/>
    </location>
</feature>
<feature type="cross-link" description="Glycyl lysine isopeptide (Lys-Gly) (interchain with G-Cter in SUMO2)" evidence="3">
    <location>
        <position position="285"/>
    </location>
</feature>
<feature type="cross-link" description="Glycyl lysine isopeptide (Lys-Gly) (interchain with G-Cter in SUMO2)" evidence="3">
    <location>
        <position position="329"/>
    </location>
</feature>
<feature type="cross-link" description="Glycyl lysine isopeptide (Lys-Gly) (interchain with G-Cter in SUMO2)" evidence="3">
    <location>
        <position position="340"/>
    </location>
</feature>
<feature type="non-terminal residue">
    <location>
        <position position="1"/>
    </location>
</feature>
<comment type="function">
    <text evidence="2">Transcriptional activator that regulates SEMA3C and PLXNA2. May regulate genes that protect epithelial cells from bacterial infection. Involved in gene regulation specifically in the gastric epithelium. Involved in bone morphogenetic protein (BMP)-mediated cardiac-specific gene expression. Binds to BMP response element (BMPRE) DNA sequences within cardiac activating regions.</text>
</comment>
<comment type="subunit">
    <text evidence="1">Interacts with LMCD1.</text>
</comment>
<comment type="subcellular location">
    <subcellularLocation>
        <location evidence="1">Nucleus</location>
    </subcellularLocation>
</comment>
<comment type="domain">
    <text evidence="1">The GATA-type zinc fingers mediate interaction with LMCD1.</text>
</comment>
<comment type="sequence caution" evidence="6">
    <conflict type="erroneous initiation">
        <sequence resource="EMBL-CDS" id="AAL09304"/>
    </conflict>
</comment>
<dbReference type="EMBL" id="AF295687">
    <property type="protein sequence ID" value="AAL09304.1"/>
    <property type="status" value="ALT_INIT"/>
    <property type="molecule type" value="mRNA"/>
</dbReference>
<dbReference type="RefSeq" id="NP_999493.2">
    <property type="nucleotide sequence ID" value="NM_214328.2"/>
</dbReference>
<dbReference type="SMR" id="Q95JA5"/>
<dbReference type="STRING" id="9823.ENSSSCP00000004009"/>
<dbReference type="PaxDb" id="9823-ENSSSCP00000004009"/>
<dbReference type="GeneID" id="397600"/>
<dbReference type="KEGG" id="ssc:397600"/>
<dbReference type="CTD" id="2627"/>
<dbReference type="eggNOG" id="KOG1601">
    <property type="taxonomic scope" value="Eukaryota"/>
</dbReference>
<dbReference type="InParanoid" id="Q95JA5"/>
<dbReference type="OrthoDB" id="515401at2759"/>
<dbReference type="Proteomes" id="UP000008227">
    <property type="component" value="Unplaced"/>
</dbReference>
<dbReference type="Proteomes" id="UP000314985">
    <property type="component" value="Unplaced"/>
</dbReference>
<dbReference type="Proteomes" id="UP000694570">
    <property type="component" value="Unplaced"/>
</dbReference>
<dbReference type="Proteomes" id="UP000694571">
    <property type="component" value="Unplaced"/>
</dbReference>
<dbReference type="Proteomes" id="UP000694720">
    <property type="component" value="Unplaced"/>
</dbReference>
<dbReference type="Proteomes" id="UP000694722">
    <property type="component" value="Unplaced"/>
</dbReference>
<dbReference type="Proteomes" id="UP000694723">
    <property type="component" value="Unplaced"/>
</dbReference>
<dbReference type="Proteomes" id="UP000694724">
    <property type="component" value="Unplaced"/>
</dbReference>
<dbReference type="Proteomes" id="UP000694725">
    <property type="component" value="Unplaced"/>
</dbReference>
<dbReference type="Proteomes" id="UP000694726">
    <property type="component" value="Unplaced"/>
</dbReference>
<dbReference type="Proteomes" id="UP000694727">
    <property type="component" value="Unplaced"/>
</dbReference>
<dbReference type="Proteomes" id="UP000694728">
    <property type="component" value="Unplaced"/>
</dbReference>
<dbReference type="GO" id="GO:0005634">
    <property type="term" value="C:nucleus"/>
    <property type="evidence" value="ECO:0000250"/>
    <property type="project" value="UniProtKB"/>
</dbReference>
<dbReference type="GO" id="GO:0000981">
    <property type="term" value="F:DNA-binding transcription factor activity, RNA polymerase II-specific"/>
    <property type="evidence" value="ECO:0000318"/>
    <property type="project" value="GO_Central"/>
</dbReference>
<dbReference type="GO" id="GO:0000978">
    <property type="term" value="F:RNA polymerase II cis-regulatory region sequence-specific DNA binding"/>
    <property type="evidence" value="ECO:0000318"/>
    <property type="project" value="GO_Central"/>
</dbReference>
<dbReference type="GO" id="GO:0008270">
    <property type="term" value="F:zinc ion binding"/>
    <property type="evidence" value="ECO:0007669"/>
    <property type="project" value="UniProtKB-KW"/>
</dbReference>
<dbReference type="GO" id="GO:0045165">
    <property type="term" value="P:cell fate commitment"/>
    <property type="evidence" value="ECO:0000318"/>
    <property type="project" value="GO_Central"/>
</dbReference>
<dbReference type="GO" id="GO:0030855">
    <property type="term" value="P:epithelial cell differentiation"/>
    <property type="evidence" value="ECO:0000318"/>
    <property type="project" value="GO_Central"/>
</dbReference>
<dbReference type="GO" id="GO:0007507">
    <property type="term" value="P:heart development"/>
    <property type="evidence" value="ECO:0007669"/>
    <property type="project" value="UniProtKB-ARBA"/>
</dbReference>
<dbReference type="GO" id="GO:0000122">
    <property type="term" value="P:negative regulation of transcription by RNA polymerase II"/>
    <property type="evidence" value="ECO:0000318"/>
    <property type="project" value="GO_Central"/>
</dbReference>
<dbReference type="GO" id="GO:0045893">
    <property type="term" value="P:positive regulation of DNA-templated transcription"/>
    <property type="evidence" value="ECO:0000250"/>
    <property type="project" value="UniProtKB"/>
</dbReference>
<dbReference type="GO" id="GO:0045944">
    <property type="term" value="P:positive regulation of transcription by RNA polymerase II"/>
    <property type="evidence" value="ECO:0000318"/>
    <property type="project" value="GO_Central"/>
</dbReference>
<dbReference type="CDD" id="cd00202">
    <property type="entry name" value="ZnF_GATA"/>
    <property type="match status" value="2"/>
</dbReference>
<dbReference type="FunFam" id="3.30.50.10:FF:000001">
    <property type="entry name" value="GATA transcription factor (GATAd)"/>
    <property type="match status" value="1"/>
</dbReference>
<dbReference type="FunFam" id="3.30.50.10:FF:000032">
    <property type="entry name" value="Transcription factor GATA-3"/>
    <property type="match status" value="1"/>
</dbReference>
<dbReference type="Gene3D" id="3.30.50.10">
    <property type="entry name" value="Erythroid Transcription Factor GATA-1, subunit A"/>
    <property type="match status" value="2"/>
</dbReference>
<dbReference type="InterPro" id="IPR008013">
    <property type="entry name" value="GATA_N"/>
</dbReference>
<dbReference type="InterPro" id="IPR016375">
    <property type="entry name" value="TF_GATA_4/5/6"/>
</dbReference>
<dbReference type="InterPro" id="IPR039355">
    <property type="entry name" value="Transcription_factor_GATA"/>
</dbReference>
<dbReference type="InterPro" id="IPR000679">
    <property type="entry name" value="Znf_GATA"/>
</dbReference>
<dbReference type="InterPro" id="IPR013088">
    <property type="entry name" value="Znf_NHR/GATA"/>
</dbReference>
<dbReference type="PANTHER" id="PTHR10071">
    <property type="entry name" value="TRANSCRIPTION FACTOR GATA FAMILY MEMBER"/>
    <property type="match status" value="1"/>
</dbReference>
<dbReference type="PANTHER" id="PTHR10071:SF23">
    <property type="entry name" value="TRANSCRIPTION FACTOR GATA-6"/>
    <property type="match status" value="1"/>
</dbReference>
<dbReference type="Pfam" id="PF00320">
    <property type="entry name" value="GATA"/>
    <property type="match status" value="2"/>
</dbReference>
<dbReference type="Pfam" id="PF05349">
    <property type="entry name" value="GATA-N"/>
    <property type="match status" value="1"/>
</dbReference>
<dbReference type="PIRSF" id="PIRSF003028">
    <property type="entry name" value="TF_GATA_4/5/6"/>
    <property type="match status" value="1"/>
</dbReference>
<dbReference type="PRINTS" id="PR00619">
    <property type="entry name" value="GATAZNFINGER"/>
</dbReference>
<dbReference type="SMART" id="SM00401">
    <property type="entry name" value="ZnF_GATA"/>
    <property type="match status" value="2"/>
</dbReference>
<dbReference type="SUPFAM" id="SSF57716">
    <property type="entry name" value="Glucocorticoid receptor-like (DNA-binding domain)"/>
    <property type="match status" value="2"/>
</dbReference>
<dbReference type="PROSITE" id="PS00344">
    <property type="entry name" value="GATA_ZN_FINGER_1"/>
    <property type="match status" value="2"/>
</dbReference>
<dbReference type="PROSITE" id="PS50114">
    <property type="entry name" value="GATA_ZN_FINGER_2"/>
    <property type="match status" value="2"/>
</dbReference>
<name>GATA6_PIG</name>
<protein>
    <recommendedName>
        <fullName>Transcription factor GATA-6</fullName>
    </recommendedName>
    <alternativeName>
        <fullName>GATA-binding factor 6</fullName>
    </alternativeName>
</protein>
<accession>Q95JA5</accession>
<sequence length="451" mass="45410">EQPEEMYQTLAALSSQGPAAYDGAPGGFVHSAAAAAAAAAAASSPVYVPTTRVGSMLPGLPYLQGAGSGPANHAGGAGSHPGWPQASADSPPYGSGGGTAGGGAAGPGSAGSAAAHVSARFPYSPSPPMANGAARDPGGYAAAGGGGAGGVSGGSGGGLAAMGSREHQYSSLSAARPLNGTYHHHHHHHPSAYSPYVGAPLTPAWPAGPFETPVLHSLQSRAGAPLPVPRGPSADLLEDLPESRECVNCGSIQTPLWRRDGTGHYLCNRCGLYSKMNGLSGPLIKPQKPVPSSRRLGLSCANCHTTTTTLWRRNAEGEPVCNACGLYMKLHGVPRPLAMKKEGIQTRKRKPKSINKSKACSGNSNNSVPMTPTSTSSNSDDCSKNTSPTTQTPASGAGASVMSGTGESANPENSELKYSGQDGLYIGVSLASPAEVTSSVRQDSWCALALA</sequence>
<proteinExistence type="evidence at transcript level"/>
<keyword id="KW-0010">Activator</keyword>
<keyword id="KW-0238">DNA-binding</keyword>
<keyword id="KW-1017">Isopeptide bond</keyword>
<keyword id="KW-0479">Metal-binding</keyword>
<keyword id="KW-0539">Nucleus</keyword>
<keyword id="KW-0597">Phosphoprotein</keyword>
<keyword id="KW-1185">Reference proteome</keyword>
<keyword id="KW-0677">Repeat</keyword>
<keyword id="KW-0804">Transcription</keyword>
<keyword id="KW-0805">Transcription regulation</keyword>
<keyword id="KW-0832">Ubl conjugation</keyword>
<keyword id="KW-0862">Zinc</keyword>
<keyword id="KW-0863">Zinc-finger</keyword>
<reference key="1">
    <citation type="submission" date="2000-08" db="EMBL/GenBank/DDBJ databases">
        <title>Regulation of VSMC differentiation.</title>
        <authorList>
            <person name="Markmann A."/>
            <person name="Kresse H."/>
        </authorList>
    </citation>
    <scope>NUCLEOTIDE SEQUENCE [MRNA]</scope>
    <source>
        <tissue>Heart</tissue>
    </source>
</reference>
<evidence type="ECO:0000250" key="1"/>
<evidence type="ECO:0000250" key="2">
    <source>
        <dbReference type="UniProtKB" id="Q61169"/>
    </source>
</evidence>
<evidence type="ECO:0000250" key="3">
    <source>
        <dbReference type="UniProtKB" id="Q92908"/>
    </source>
</evidence>
<evidence type="ECO:0000255" key="4">
    <source>
        <dbReference type="PROSITE-ProRule" id="PRU00094"/>
    </source>
</evidence>
<evidence type="ECO:0000256" key="5">
    <source>
        <dbReference type="SAM" id="MobiDB-lite"/>
    </source>
</evidence>
<evidence type="ECO:0000305" key="6"/>
<organism>
    <name type="scientific">Sus scrofa</name>
    <name type="common">Pig</name>
    <dbReference type="NCBI Taxonomy" id="9823"/>
    <lineage>
        <taxon>Eukaryota</taxon>
        <taxon>Metazoa</taxon>
        <taxon>Chordata</taxon>
        <taxon>Craniata</taxon>
        <taxon>Vertebrata</taxon>
        <taxon>Euteleostomi</taxon>
        <taxon>Mammalia</taxon>
        <taxon>Eutheria</taxon>
        <taxon>Laurasiatheria</taxon>
        <taxon>Artiodactyla</taxon>
        <taxon>Suina</taxon>
        <taxon>Suidae</taxon>
        <taxon>Sus</taxon>
    </lineage>
</organism>